<reference key="1">
    <citation type="submission" date="2007-09" db="EMBL/GenBank/DDBJ databases">
        <title>Complete genome sequencing of Rickettsia bellii.</title>
        <authorList>
            <person name="Madan A."/>
            <person name="Lee H."/>
            <person name="Madan A."/>
            <person name="Yoon J.-G."/>
            <person name="Ryu G.-Y."/>
            <person name="Dasch G."/>
            <person name="Ereemeva M."/>
        </authorList>
    </citation>
    <scope>NUCLEOTIDE SEQUENCE [LARGE SCALE GENOMIC DNA]</scope>
    <source>
        <strain>OSU 85-389</strain>
    </source>
</reference>
<gene>
    <name evidence="1" type="primary">hemC</name>
    <name type="ordered locus">A1I_06040</name>
</gene>
<accession>A8GXC8</accession>
<feature type="chain" id="PRO_1000047762" description="Porphobilinogen deaminase">
    <location>
        <begin position="1"/>
        <end position="300"/>
    </location>
</feature>
<feature type="modified residue" description="S-(dipyrrolylmethanemethyl)cysteine" evidence="1">
    <location>
        <position position="242"/>
    </location>
</feature>
<protein>
    <recommendedName>
        <fullName evidence="1">Porphobilinogen deaminase</fullName>
        <shortName evidence="1">PBG</shortName>
        <ecNumber evidence="1">2.5.1.61</ecNumber>
    </recommendedName>
    <alternativeName>
        <fullName evidence="1">Hydroxymethylbilane synthase</fullName>
        <shortName evidence="1">HMBS</shortName>
    </alternativeName>
    <alternativeName>
        <fullName evidence="1">Pre-uroporphyrinogen synthase</fullName>
    </alternativeName>
</protein>
<evidence type="ECO:0000255" key="1">
    <source>
        <dbReference type="HAMAP-Rule" id="MF_00260"/>
    </source>
</evidence>
<organism>
    <name type="scientific">Rickettsia bellii (strain OSU 85-389)</name>
    <dbReference type="NCBI Taxonomy" id="391896"/>
    <lineage>
        <taxon>Bacteria</taxon>
        <taxon>Pseudomonadati</taxon>
        <taxon>Pseudomonadota</taxon>
        <taxon>Alphaproteobacteria</taxon>
        <taxon>Rickettsiales</taxon>
        <taxon>Rickettsiaceae</taxon>
        <taxon>Rickettsieae</taxon>
        <taxon>Rickettsia</taxon>
        <taxon>belli group</taxon>
    </lineage>
</organism>
<dbReference type="EC" id="2.5.1.61" evidence="1"/>
<dbReference type="EMBL" id="CP000849">
    <property type="protein sequence ID" value="ABV79528.1"/>
    <property type="molecule type" value="Genomic_DNA"/>
</dbReference>
<dbReference type="RefSeq" id="WP_011477036.1">
    <property type="nucleotide sequence ID" value="NC_009883.1"/>
</dbReference>
<dbReference type="SMR" id="A8GXC8"/>
<dbReference type="KEGG" id="rbo:A1I_06040"/>
<dbReference type="HOGENOM" id="CLU_019704_0_2_5"/>
<dbReference type="UniPathway" id="UPA00251">
    <property type="reaction ID" value="UER00319"/>
</dbReference>
<dbReference type="GO" id="GO:0005737">
    <property type="term" value="C:cytoplasm"/>
    <property type="evidence" value="ECO:0007669"/>
    <property type="project" value="TreeGrafter"/>
</dbReference>
<dbReference type="GO" id="GO:0004418">
    <property type="term" value="F:hydroxymethylbilane synthase activity"/>
    <property type="evidence" value="ECO:0007669"/>
    <property type="project" value="UniProtKB-UniRule"/>
</dbReference>
<dbReference type="GO" id="GO:0006782">
    <property type="term" value="P:protoporphyrinogen IX biosynthetic process"/>
    <property type="evidence" value="ECO:0007669"/>
    <property type="project" value="UniProtKB-UniRule"/>
</dbReference>
<dbReference type="CDD" id="cd13647">
    <property type="entry name" value="PBP2_PBGD_2"/>
    <property type="match status" value="1"/>
</dbReference>
<dbReference type="FunFam" id="3.40.190.10:FF:000004">
    <property type="entry name" value="Porphobilinogen deaminase"/>
    <property type="match status" value="1"/>
</dbReference>
<dbReference type="FunFam" id="3.40.190.10:FF:000005">
    <property type="entry name" value="Porphobilinogen deaminase"/>
    <property type="match status" value="1"/>
</dbReference>
<dbReference type="Gene3D" id="3.40.190.10">
    <property type="entry name" value="Periplasmic binding protein-like II"/>
    <property type="match status" value="2"/>
</dbReference>
<dbReference type="Gene3D" id="3.30.160.40">
    <property type="entry name" value="Porphobilinogen deaminase, C-terminal domain"/>
    <property type="match status" value="1"/>
</dbReference>
<dbReference type="HAMAP" id="MF_00260">
    <property type="entry name" value="Porphobil_deam"/>
    <property type="match status" value="1"/>
</dbReference>
<dbReference type="InterPro" id="IPR000860">
    <property type="entry name" value="HemC"/>
</dbReference>
<dbReference type="InterPro" id="IPR022419">
    <property type="entry name" value="Porphobilin_deaminase_cofac_BS"/>
</dbReference>
<dbReference type="InterPro" id="IPR022417">
    <property type="entry name" value="Porphobilin_deaminase_N"/>
</dbReference>
<dbReference type="InterPro" id="IPR022418">
    <property type="entry name" value="Porphobilinogen_deaminase_C"/>
</dbReference>
<dbReference type="InterPro" id="IPR036803">
    <property type="entry name" value="Porphobilinogen_deaminase_C_sf"/>
</dbReference>
<dbReference type="NCBIfam" id="TIGR00212">
    <property type="entry name" value="hemC"/>
    <property type="match status" value="1"/>
</dbReference>
<dbReference type="PANTHER" id="PTHR11557">
    <property type="entry name" value="PORPHOBILINOGEN DEAMINASE"/>
    <property type="match status" value="1"/>
</dbReference>
<dbReference type="PANTHER" id="PTHR11557:SF0">
    <property type="entry name" value="PORPHOBILINOGEN DEAMINASE"/>
    <property type="match status" value="1"/>
</dbReference>
<dbReference type="Pfam" id="PF01379">
    <property type="entry name" value="Porphobil_deam"/>
    <property type="match status" value="1"/>
</dbReference>
<dbReference type="Pfam" id="PF03900">
    <property type="entry name" value="Porphobil_deamC"/>
    <property type="match status" value="1"/>
</dbReference>
<dbReference type="PIRSF" id="PIRSF001438">
    <property type="entry name" value="4pyrrol_synth_OHMeBilane_synth"/>
    <property type="match status" value="1"/>
</dbReference>
<dbReference type="PRINTS" id="PR00151">
    <property type="entry name" value="PORPHBDMNASE"/>
</dbReference>
<dbReference type="SUPFAM" id="SSF53850">
    <property type="entry name" value="Periplasmic binding protein-like II"/>
    <property type="match status" value="1"/>
</dbReference>
<dbReference type="SUPFAM" id="SSF54782">
    <property type="entry name" value="Porphobilinogen deaminase (hydroxymethylbilane synthase), C-terminal domain"/>
    <property type="match status" value="1"/>
</dbReference>
<dbReference type="PROSITE" id="PS00533">
    <property type="entry name" value="PORPHOBILINOGEN_DEAM"/>
    <property type="match status" value="1"/>
</dbReference>
<proteinExistence type="inferred from homology"/>
<comment type="function">
    <text evidence="1">Tetrapolymerization of the monopyrrole PBG into the hydroxymethylbilane pre-uroporphyrinogen in several discrete steps.</text>
</comment>
<comment type="catalytic activity">
    <reaction evidence="1">
        <text>4 porphobilinogen + H2O = hydroxymethylbilane + 4 NH4(+)</text>
        <dbReference type="Rhea" id="RHEA:13185"/>
        <dbReference type="ChEBI" id="CHEBI:15377"/>
        <dbReference type="ChEBI" id="CHEBI:28938"/>
        <dbReference type="ChEBI" id="CHEBI:57845"/>
        <dbReference type="ChEBI" id="CHEBI:58126"/>
        <dbReference type="EC" id="2.5.1.61"/>
    </reaction>
</comment>
<comment type="cofactor">
    <cofactor evidence="1">
        <name>dipyrromethane</name>
        <dbReference type="ChEBI" id="CHEBI:60342"/>
    </cofactor>
    <text evidence="1">Binds 1 dipyrromethane group covalently.</text>
</comment>
<comment type="pathway">
    <text evidence="1">Porphyrin-containing compound metabolism; protoporphyrin-IX biosynthesis; coproporphyrinogen-III from 5-aminolevulinate: step 2/4.</text>
</comment>
<comment type="subunit">
    <text evidence="1">Monomer.</text>
</comment>
<comment type="miscellaneous">
    <text evidence="1">The porphobilinogen subunits are added to the dipyrromethane group.</text>
</comment>
<comment type="similarity">
    <text evidence="1">Belongs to the HMBS family.</text>
</comment>
<name>HEM3_RICB8</name>
<sequence>MINSIRIGTRKSKLALTQTNLVIEQIKQHFPNINCEIVEITTSGDLIQNKPLYDIGGKALFLKEIEQALLNKKVDLAVHSLKDVPGIIPKDLSIEAVLEREDSRDVFVCLTHKSIEELPKNAVIGTSSVRRKLCVQRMRPDLEIIVFRGNVDSRINKLINKEVDATILAYAGLKRLNAFNPEYCHLIEHSQMLPCIGQGVIAIEIRKDDHDMIEICKQINHLPTFELIKPERALLEYLDANCRTPIGAYSKYLDNGDIQTDFMLGNLDGSKIAFHTEISNPKTSKESGIKAAKVMLLSLS</sequence>
<keyword id="KW-0627">Porphyrin biosynthesis</keyword>
<keyword id="KW-0808">Transferase</keyword>